<protein>
    <recommendedName>
        <fullName evidence="1">Small ribosomal subunit protein uS7</fullName>
    </recommendedName>
    <alternativeName>
        <fullName evidence="2">30S ribosomal protein S7</fullName>
    </alternativeName>
</protein>
<reference key="1">
    <citation type="submission" date="2007-04" db="EMBL/GenBank/DDBJ databases">
        <title>Complete sequence of chromosome of Rhodobacter sphaeroides ATCC 17025.</title>
        <authorList>
            <consortium name="US DOE Joint Genome Institute"/>
            <person name="Copeland A."/>
            <person name="Lucas S."/>
            <person name="Lapidus A."/>
            <person name="Barry K."/>
            <person name="Detter J.C."/>
            <person name="Glavina del Rio T."/>
            <person name="Hammon N."/>
            <person name="Israni S."/>
            <person name="Dalin E."/>
            <person name="Tice H."/>
            <person name="Pitluck S."/>
            <person name="Chertkov O."/>
            <person name="Brettin T."/>
            <person name="Bruce D."/>
            <person name="Han C."/>
            <person name="Schmutz J."/>
            <person name="Larimer F."/>
            <person name="Land M."/>
            <person name="Hauser L."/>
            <person name="Kyrpides N."/>
            <person name="Kim E."/>
            <person name="Richardson P."/>
            <person name="Mackenzie C."/>
            <person name="Choudhary M."/>
            <person name="Donohue T.J."/>
            <person name="Kaplan S."/>
        </authorList>
    </citation>
    <scope>NUCLEOTIDE SEQUENCE [LARGE SCALE GENOMIC DNA]</scope>
    <source>
        <strain>ATCC 17025 / ATH 2.4.3</strain>
    </source>
</reference>
<gene>
    <name evidence="1" type="primary">rpsG</name>
    <name type="ordered locus">Rsph17025_2538</name>
</gene>
<keyword id="KW-0687">Ribonucleoprotein</keyword>
<keyword id="KW-0689">Ribosomal protein</keyword>
<keyword id="KW-0694">RNA-binding</keyword>
<keyword id="KW-0699">rRNA-binding</keyword>
<keyword id="KW-0820">tRNA-binding</keyword>
<comment type="function">
    <text evidence="1">One of the primary rRNA binding proteins, it binds directly to 16S rRNA where it nucleates assembly of the head domain of the 30S subunit. Is located at the subunit interface close to the decoding center, probably blocks exit of the E-site tRNA.</text>
</comment>
<comment type="subunit">
    <text evidence="1">Part of the 30S ribosomal subunit. Contacts proteins S9 and S11.</text>
</comment>
<comment type="similarity">
    <text evidence="1">Belongs to the universal ribosomal protein uS7 family.</text>
</comment>
<proteinExistence type="inferred from homology"/>
<organism>
    <name type="scientific">Cereibacter sphaeroides (strain ATCC 17025 / ATH 2.4.3)</name>
    <name type="common">Rhodobacter sphaeroides</name>
    <dbReference type="NCBI Taxonomy" id="349102"/>
    <lineage>
        <taxon>Bacteria</taxon>
        <taxon>Pseudomonadati</taxon>
        <taxon>Pseudomonadota</taxon>
        <taxon>Alphaproteobacteria</taxon>
        <taxon>Rhodobacterales</taxon>
        <taxon>Paracoccaceae</taxon>
        <taxon>Cereibacter</taxon>
    </lineage>
</organism>
<accession>A4WVL2</accession>
<evidence type="ECO:0000255" key="1">
    <source>
        <dbReference type="HAMAP-Rule" id="MF_00480"/>
    </source>
</evidence>
<evidence type="ECO:0000305" key="2"/>
<name>RS7_CERS5</name>
<dbReference type="EMBL" id="CP000661">
    <property type="protein sequence ID" value="ABP71426.1"/>
    <property type="molecule type" value="Genomic_DNA"/>
</dbReference>
<dbReference type="SMR" id="A4WVL2"/>
<dbReference type="STRING" id="349102.Rsph17025_2538"/>
<dbReference type="KEGG" id="rsq:Rsph17025_2538"/>
<dbReference type="eggNOG" id="COG0049">
    <property type="taxonomic scope" value="Bacteria"/>
</dbReference>
<dbReference type="HOGENOM" id="CLU_072226_1_1_5"/>
<dbReference type="BioCyc" id="RSPH349102:G1G8M-2616-MONOMER"/>
<dbReference type="GO" id="GO:0015935">
    <property type="term" value="C:small ribosomal subunit"/>
    <property type="evidence" value="ECO:0007669"/>
    <property type="project" value="InterPro"/>
</dbReference>
<dbReference type="GO" id="GO:0019843">
    <property type="term" value="F:rRNA binding"/>
    <property type="evidence" value="ECO:0007669"/>
    <property type="project" value="UniProtKB-UniRule"/>
</dbReference>
<dbReference type="GO" id="GO:0003735">
    <property type="term" value="F:structural constituent of ribosome"/>
    <property type="evidence" value="ECO:0007669"/>
    <property type="project" value="InterPro"/>
</dbReference>
<dbReference type="GO" id="GO:0000049">
    <property type="term" value="F:tRNA binding"/>
    <property type="evidence" value="ECO:0007669"/>
    <property type="project" value="UniProtKB-UniRule"/>
</dbReference>
<dbReference type="GO" id="GO:0006412">
    <property type="term" value="P:translation"/>
    <property type="evidence" value="ECO:0007669"/>
    <property type="project" value="UniProtKB-UniRule"/>
</dbReference>
<dbReference type="CDD" id="cd14869">
    <property type="entry name" value="uS7_Bacteria"/>
    <property type="match status" value="1"/>
</dbReference>
<dbReference type="FunFam" id="1.10.455.10:FF:000001">
    <property type="entry name" value="30S ribosomal protein S7"/>
    <property type="match status" value="1"/>
</dbReference>
<dbReference type="Gene3D" id="1.10.455.10">
    <property type="entry name" value="Ribosomal protein S7 domain"/>
    <property type="match status" value="1"/>
</dbReference>
<dbReference type="HAMAP" id="MF_00480_B">
    <property type="entry name" value="Ribosomal_uS7_B"/>
    <property type="match status" value="1"/>
</dbReference>
<dbReference type="InterPro" id="IPR000235">
    <property type="entry name" value="Ribosomal_uS7"/>
</dbReference>
<dbReference type="InterPro" id="IPR005717">
    <property type="entry name" value="Ribosomal_uS7_bac/org-type"/>
</dbReference>
<dbReference type="InterPro" id="IPR020606">
    <property type="entry name" value="Ribosomal_uS7_CS"/>
</dbReference>
<dbReference type="InterPro" id="IPR023798">
    <property type="entry name" value="Ribosomal_uS7_dom"/>
</dbReference>
<dbReference type="InterPro" id="IPR036823">
    <property type="entry name" value="Ribosomal_uS7_dom_sf"/>
</dbReference>
<dbReference type="NCBIfam" id="TIGR01029">
    <property type="entry name" value="rpsG_bact"/>
    <property type="match status" value="1"/>
</dbReference>
<dbReference type="PANTHER" id="PTHR11205">
    <property type="entry name" value="RIBOSOMAL PROTEIN S7"/>
    <property type="match status" value="1"/>
</dbReference>
<dbReference type="Pfam" id="PF00177">
    <property type="entry name" value="Ribosomal_S7"/>
    <property type="match status" value="1"/>
</dbReference>
<dbReference type="PIRSF" id="PIRSF002122">
    <property type="entry name" value="RPS7p_RPS7a_RPS5e_RPS7o"/>
    <property type="match status" value="1"/>
</dbReference>
<dbReference type="SUPFAM" id="SSF47973">
    <property type="entry name" value="Ribosomal protein S7"/>
    <property type="match status" value="1"/>
</dbReference>
<dbReference type="PROSITE" id="PS00052">
    <property type="entry name" value="RIBOSOMAL_S7"/>
    <property type="match status" value="1"/>
</dbReference>
<feature type="chain" id="PRO_1000014272" description="Small ribosomal subunit protein uS7">
    <location>
        <begin position="1"/>
        <end position="156"/>
    </location>
</feature>
<sequence length="156" mass="17950">MSRRHAAEKREILPDAKFGDTVLTKFMNNLMIDGKKSVAESIVYNALDRVQTRLKREPLEAFHEALDNVKPSVEVRSRRVGGATYQVPVEVRTERREALAIRWLITAARKRNENTMEERLAAELADACNNRGTAVKKREDTHKMADANKAFSHYRW</sequence>